<evidence type="ECO:0000250" key="1"/>
<evidence type="ECO:0000255" key="2"/>
<evidence type="ECO:0000255" key="3">
    <source>
        <dbReference type="PROSITE-ProRule" id="PRU00521"/>
    </source>
</evidence>
<evidence type="ECO:0000269" key="4">
    <source>
    </source>
</evidence>
<evidence type="ECO:0000269" key="5">
    <source>
    </source>
</evidence>
<evidence type="ECO:0000269" key="6">
    <source>
    </source>
</evidence>
<evidence type="ECO:0000269" key="7">
    <source>
    </source>
</evidence>
<evidence type="ECO:0000269" key="8">
    <source>
    </source>
</evidence>
<evidence type="ECO:0000305" key="9"/>
<evidence type="ECO:0007829" key="10">
    <source>
        <dbReference type="PDB" id="7W55"/>
    </source>
</evidence>
<evidence type="ECO:0007829" key="11">
    <source>
        <dbReference type="PDB" id="7XK8"/>
    </source>
</evidence>
<comment type="function">
    <text evidence="1 6">Receptor for the neuromedin-U and neuromedin-S neuropeptides.</text>
</comment>
<comment type="interaction">
    <interactant intactId="EBI-10303844">
        <id>Q9GZQ4</id>
    </interactant>
    <interactant intactId="EBI-10173507">
        <id>Q6UY14-3</id>
        <label>ADAMTSL4</label>
    </interactant>
    <organismsDiffer>false</organismsDiffer>
    <experiments>3</experiments>
</comment>
<comment type="interaction">
    <interactant intactId="EBI-10303844">
        <id>Q9GZQ4</id>
    </interactant>
    <interactant intactId="EBI-533224">
        <id>P15884</id>
        <label>TCF4</label>
    </interactant>
    <organismsDiffer>false</organismsDiffer>
    <experiments>3</experiments>
</comment>
<comment type="interaction">
    <interactant intactId="EBI-10303844">
        <id>Q9GZQ4</id>
    </interactant>
    <interactant intactId="EBI-355744">
        <id>Q12933</id>
        <label>TRAF2</label>
    </interactant>
    <organismsDiffer>false</organismsDiffer>
    <experiments>3</experiments>
</comment>
<comment type="subcellular location">
    <subcellularLocation>
        <location>Cell membrane</location>
        <topology>Multi-pass membrane protein</topology>
    </subcellularLocation>
</comment>
<comment type="tissue specificity">
    <text evidence="4 5 6 7">Predominantly expressed in the CNS, particularly in the medulla oblongata, pontine reticular formation, spinal cord, and thalamus. High level in testis whereas lower levels are present in a variety of peripheral tissues including the gastrointestinal tract, genitourinary tract, liver, pancreas, adrenal gland, thyroid gland, lung, trachea, spleen and thymus.</text>
</comment>
<comment type="similarity">
    <text evidence="3">Belongs to the G-protein coupled receptor 1 family.</text>
</comment>
<comment type="caution">
    <text evidence="9">It is uncertain whether Met-1 or Met-4 is the initiator.</text>
</comment>
<comment type="sequence caution" evidence="9">
    <conflict type="erroneous initiation">
        <sequence resource="EMBL-CDS" id="BAB13721"/>
    </conflict>
    <text>Truncated N-terminus.</text>
</comment>
<name>NMUR2_HUMAN</name>
<accession>Q9GZQ4</accession>
<accession>Q7LC54</accession>
<accession>Q96AM5</accession>
<accession>Q9NRA6</accession>
<dbReference type="EMBL" id="AB041228">
    <property type="protein sequence ID" value="BAB13721.1"/>
    <property type="status" value="ALT_INIT"/>
    <property type="molecule type" value="mRNA"/>
</dbReference>
<dbReference type="EMBL" id="AF272363">
    <property type="protein sequence ID" value="AAG24794.1"/>
    <property type="molecule type" value="mRNA"/>
</dbReference>
<dbReference type="EMBL" id="AF292402">
    <property type="protein sequence ID" value="AAG03064.1"/>
    <property type="molecule type" value="mRNA"/>
</dbReference>
<dbReference type="EMBL" id="AC008571">
    <property type="status" value="NOT_ANNOTATED_CDS"/>
    <property type="molecule type" value="Genomic_DNA"/>
</dbReference>
<dbReference type="EMBL" id="BC016938">
    <property type="protein sequence ID" value="AAH16938.1"/>
    <property type="molecule type" value="mRNA"/>
</dbReference>
<dbReference type="EMBL" id="BC067776">
    <property type="protein sequence ID" value="AAH67776.1"/>
    <property type="molecule type" value="mRNA"/>
</dbReference>
<dbReference type="EMBL" id="AF242874">
    <property type="protein sequence ID" value="AAF82755.1"/>
    <property type="molecule type" value="mRNA"/>
</dbReference>
<dbReference type="CCDS" id="CCDS4321.1"/>
<dbReference type="RefSeq" id="NP_064552.3">
    <property type="nucleotide sequence ID" value="NM_020167.4"/>
</dbReference>
<dbReference type="PDB" id="7W55">
    <property type="method" value="EM"/>
    <property type="resolution" value="2.80 A"/>
    <property type="chains" value="R=1-415"/>
</dbReference>
<dbReference type="PDB" id="7W57">
    <property type="method" value="EM"/>
    <property type="resolution" value="3.20 A"/>
    <property type="chains" value="R=1-415"/>
</dbReference>
<dbReference type="PDB" id="7XK8">
    <property type="method" value="EM"/>
    <property type="resolution" value="3.30 A"/>
    <property type="chains" value="R=1-345"/>
</dbReference>
<dbReference type="PDBsum" id="7W55"/>
<dbReference type="PDBsum" id="7W57"/>
<dbReference type="PDBsum" id="7XK8"/>
<dbReference type="EMDB" id="EMD-32314"/>
<dbReference type="EMDB" id="EMD-32316"/>
<dbReference type="EMDB" id="EMD-33247"/>
<dbReference type="SMR" id="Q9GZQ4"/>
<dbReference type="BioGRID" id="121250">
    <property type="interactions" value="30"/>
</dbReference>
<dbReference type="FunCoup" id="Q9GZQ4">
    <property type="interactions" value="548"/>
</dbReference>
<dbReference type="IntAct" id="Q9GZQ4">
    <property type="interactions" value="27"/>
</dbReference>
<dbReference type="STRING" id="9606.ENSP00000255262"/>
<dbReference type="BindingDB" id="Q9GZQ4"/>
<dbReference type="ChEMBL" id="CHEMBL1075144"/>
<dbReference type="DrugCentral" id="Q9GZQ4"/>
<dbReference type="GuidetoPHARMACOLOGY" id="299"/>
<dbReference type="GlyCosmos" id="Q9GZQ4">
    <property type="glycosylation" value="3 sites, No reported glycans"/>
</dbReference>
<dbReference type="GlyGen" id="Q9GZQ4">
    <property type="glycosylation" value="3 sites"/>
</dbReference>
<dbReference type="iPTMnet" id="Q9GZQ4"/>
<dbReference type="PhosphoSitePlus" id="Q9GZQ4"/>
<dbReference type="BioMuta" id="NMUR2"/>
<dbReference type="DMDM" id="311033403"/>
<dbReference type="jPOST" id="Q9GZQ4"/>
<dbReference type="MassIVE" id="Q9GZQ4"/>
<dbReference type="PaxDb" id="9606-ENSP00000255262"/>
<dbReference type="PeptideAtlas" id="Q9GZQ4"/>
<dbReference type="Antibodypedia" id="16394">
    <property type="antibodies" value="190 antibodies from 29 providers"/>
</dbReference>
<dbReference type="DNASU" id="56923"/>
<dbReference type="Ensembl" id="ENST00000255262.4">
    <property type="protein sequence ID" value="ENSP00000255262.4"/>
    <property type="gene ID" value="ENSG00000132911.5"/>
</dbReference>
<dbReference type="GeneID" id="56923"/>
<dbReference type="KEGG" id="hsa:56923"/>
<dbReference type="MANE-Select" id="ENST00000255262.4">
    <property type="protein sequence ID" value="ENSP00000255262.4"/>
    <property type="RefSeq nucleotide sequence ID" value="NM_020167.5"/>
    <property type="RefSeq protein sequence ID" value="NP_064552.3"/>
</dbReference>
<dbReference type="UCSC" id="uc003luv.3">
    <property type="organism name" value="human"/>
</dbReference>
<dbReference type="AGR" id="HGNC:16454"/>
<dbReference type="CTD" id="56923"/>
<dbReference type="DisGeNET" id="56923"/>
<dbReference type="GeneCards" id="NMUR2"/>
<dbReference type="HGNC" id="HGNC:16454">
    <property type="gene designation" value="NMUR2"/>
</dbReference>
<dbReference type="HPA" id="ENSG00000132911">
    <property type="expression patterns" value="Tissue enhanced (stomach, testis)"/>
</dbReference>
<dbReference type="MIM" id="605108">
    <property type="type" value="gene"/>
</dbReference>
<dbReference type="neXtProt" id="NX_Q9GZQ4"/>
<dbReference type="OpenTargets" id="ENSG00000132911"/>
<dbReference type="PharmGKB" id="PA31664"/>
<dbReference type="VEuPathDB" id="HostDB:ENSG00000132911"/>
<dbReference type="eggNOG" id="KOG3656">
    <property type="taxonomic scope" value="Eukaryota"/>
</dbReference>
<dbReference type="GeneTree" id="ENSGT01120000271823"/>
<dbReference type="HOGENOM" id="CLU_009579_6_5_1"/>
<dbReference type="InParanoid" id="Q9GZQ4"/>
<dbReference type="OMA" id="FSFVVEW"/>
<dbReference type="OrthoDB" id="5950040at2759"/>
<dbReference type="PAN-GO" id="Q9GZQ4">
    <property type="GO annotations" value="3 GO annotations based on evolutionary models"/>
</dbReference>
<dbReference type="PhylomeDB" id="Q9GZQ4"/>
<dbReference type="TreeFam" id="TF318522"/>
<dbReference type="PathwayCommons" id="Q9GZQ4"/>
<dbReference type="Reactome" id="R-HSA-375276">
    <property type="pathway name" value="Peptide ligand-binding receptors"/>
</dbReference>
<dbReference type="Reactome" id="R-HSA-416476">
    <property type="pathway name" value="G alpha (q) signalling events"/>
</dbReference>
<dbReference type="Reactome" id="R-HSA-418594">
    <property type="pathway name" value="G alpha (i) signalling events"/>
</dbReference>
<dbReference type="SignaLink" id="Q9GZQ4"/>
<dbReference type="SIGNOR" id="Q9GZQ4"/>
<dbReference type="BioGRID-ORCS" id="56923">
    <property type="hits" value="10 hits in 1134 CRISPR screens"/>
</dbReference>
<dbReference type="GeneWiki" id="Neuromedin_U_receptor_2"/>
<dbReference type="GenomeRNAi" id="56923"/>
<dbReference type="Pharos" id="Q9GZQ4">
    <property type="development level" value="Tchem"/>
</dbReference>
<dbReference type="PRO" id="PR:Q9GZQ4"/>
<dbReference type="Proteomes" id="UP000005640">
    <property type="component" value="Chromosome 5"/>
</dbReference>
<dbReference type="RNAct" id="Q9GZQ4">
    <property type="molecule type" value="protein"/>
</dbReference>
<dbReference type="Bgee" id="ENSG00000132911">
    <property type="expression patterns" value="Expressed in tibialis anterior and 57 other cell types or tissues"/>
</dbReference>
<dbReference type="GO" id="GO:0016020">
    <property type="term" value="C:membrane"/>
    <property type="evidence" value="ECO:0000314"/>
    <property type="project" value="UniProtKB"/>
</dbReference>
<dbReference type="GO" id="GO:0005886">
    <property type="term" value="C:plasma membrane"/>
    <property type="evidence" value="ECO:0000314"/>
    <property type="project" value="HPA"/>
</dbReference>
<dbReference type="GO" id="GO:0004930">
    <property type="term" value="F:G protein-coupled receptor activity"/>
    <property type="evidence" value="ECO:0000304"/>
    <property type="project" value="ProtInc"/>
</dbReference>
<dbReference type="GO" id="GO:0005525">
    <property type="term" value="F:GTP binding"/>
    <property type="evidence" value="ECO:0000314"/>
    <property type="project" value="UniProtKB"/>
</dbReference>
<dbReference type="GO" id="GO:0005229">
    <property type="term" value="F:intracellularly calcium-gated chloride channel activity"/>
    <property type="evidence" value="ECO:0000314"/>
    <property type="project" value="UniProtKB"/>
</dbReference>
<dbReference type="GO" id="GO:0042924">
    <property type="term" value="F:neuromedin U binding"/>
    <property type="evidence" value="ECO:0000314"/>
    <property type="project" value="UniProtKB"/>
</dbReference>
<dbReference type="GO" id="GO:0001607">
    <property type="term" value="F:neuromedin U receptor activity"/>
    <property type="evidence" value="ECO:0000314"/>
    <property type="project" value="UniProtKB"/>
</dbReference>
<dbReference type="GO" id="GO:0008188">
    <property type="term" value="F:neuropeptide receptor activity"/>
    <property type="evidence" value="ECO:0000318"/>
    <property type="project" value="GO_Central"/>
</dbReference>
<dbReference type="GO" id="GO:0050482">
    <property type="term" value="P:arachidonate secretion"/>
    <property type="evidence" value="ECO:0000314"/>
    <property type="project" value="UniProtKB"/>
</dbReference>
<dbReference type="GO" id="GO:0007267">
    <property type="term" value="P:cell-cell signaling"/>
    <property type="evidence" value="ECO:0000304"/>
    <property type="project" value="ProtInc"/>
</dbReference>
<dbReference type="GO" id="GO:0007417">
    <property type="term" value="P:central nervous system development"/>
    <property type="evidence" value="ECO:0000304"/>
    <property type="project" value="ProtInc"/>
</dbReference>
<dbReference type="GO" id="GO:0007631">
    <property type="term" value="P:feeding behavior"/>
    <property type="evidence" value="ECO:0000304"/>
    <property type="project" value="ProtInc"/>
</dbReference>
<dbReference type="GO" id="GO:0007625">
    <property type="term" value="P:grooming behavior"/>
    <property type="evidence" value="ECO:0007669"/>
    <property type="project" value="Ensembl"/>
</dbReference>
<dbReference type="GO" id="GO:0007218">
    <property type="term" value="P:neuropeptide signaling pathway"/>
    <property type="evidence" value="ECO:0000314"/>
    <property type="project" value="UniProtKB"/>
</dbReference>
<dbReference type="GO" id="GO:0007200">
    <property type="term" value="P:phospholipase C-activating G protein-coupled receptor signaling pathway"/>
    <property type="evidence" value="ECO:0000314"/>
    <property type="project" value="UniProtKB"/>
</dbReference>
<dbReference type="GO" id="GO:0050850">
    <property type="term" value="P:positive regulation of calcium-mediated signaling"/>
    <property type="evidence" value="ECO:0000303"/>
    <property type="project" value="UniProtKB"/>
</dbReference>
<dbReference type="GO" id="GO:0002023">
    <property type="term" value="P:reduction of food intake in response to dietary excess"/>
    <property type="evidence" value="ECO:0007669"/>
    <property type="project" value="Ensembl"/>
</dbReference>
<dbReference type="GO" id="GO:0006940">
    <property type="term" value="P:regulation of smooth muscle contraction"/>
    <property type="evidence" value="ECO:0000303"/>
    <property type="project" value="UniProtKB"/>
</dbReference>
<dbReference type="GO" id="GO:0048265">
    <property type="term" value="P:response to pain"/>
    <property type="evidence" value="ECO:0007669"/>
    <property type="project" value="Ensembl"/>
</dbReference>
<dbReference type="CDD" id="cd15357">
    <property type="entry name" value="7tmA_NMU-R2"/>
    <property type="match status" value="1"/>
</dbReference>
<dbReference type="FunFam" id="1.20.1070.10:FF:000214">
    <property type="entry name" value="Neuromedin U receptor 1"/>
    <property type="match status" value="1"/>
</dbReference>
<dbReference type="Gene3D" id="1.20.1070.10">
    <property type="entry name" value="Rhodopsin 7-helix transmembrane proteins"/>
    <property type="match status" value="1"/>
</dbReference>
<dbReference type="InterPro" id="IPR000276">
    <property type="entry name" value="GPCR_Rhodpsn"/>
</dbReference>
<dbReference type="InterPro" id="IPR017452">
    <property type="entry name" value="GPCR_Rhodpsn_7TM"/>
</dbReference>
<dbReference type="InterPro" id="IPR005390">
    <property type="entry name" value="NeuromedU_rcpt"/>
</dbReference>
<dbReference type="InterPro" id="IPR005392">
    <property type="entry name" value="NeuromedU_rcpt_2"/>
</dbReference>
<dbReference type="InterPro" id="IPR045561">
    <property type="entry name" value="NMU-R2_C"/>
</dbReference>
<dbReference type="PANTHER" id="PTHR24243">
    <property type="entry name" value="G-PROTEIN COUPLED RECEPTOR"/>
    <property type="match status" value="1"/>
</dbReference>
<dbReference type="PANTHER" id="PTHR24243:SF14">
    <property type="entry name" value="NEUROMEDIN-U RECEPTOR 2"/>
    <property type="match status" value="1"/>
</dbReference>
<dbReference type="Pfam" id="PF00001">
    <property type="entry name" value="7tm_1"/>
    <property type="match status" value="1"/>
</dbReference>
<dbReference type="Pfam" id="PF19285">
    <property type="entry name" value="NmU-R2_C_term"/>
    <property type="match status" value="1"/>
</dbReference>
<dbReference type="PRINTS" id="PR00237">
    <property type="entry name" value="GPCRRHODOPSN"/>
</dbReference>
<dbReference type="PRINTS" id="PR01565">
    <property type="entry name" value="NEUROMEDINUR"/>
</dbReference>
<dbReference type="PRINTS" id="PR01567">
    <property type="entry name" value="NEUROMEDNU2R"/>
</dbReference>
<dbReference type="SMART" id="SM01381">
    <property type="entry name" value="7TM_GPCR_Srsx"/>
    <property type="match status" value="1"/>
</dbReference>
<dbReference type="SUPFAM" id="SSF81321">
    <property type="entry name" value="Family A G protein-coupled receptor-like"/>
    <property type="match status" value="1"/>
</dbReference>
<dbReference type="PROSITE" id="PS00237">
    <property type="entry name" value="G_PROTEIN_RECEP_F1_1"/>
    <property type="match status" value="1"/>
</dbReference>
<dbReference type="PROSITE" id="PS50262">
    <property type="entry name" value="G_PROTEIN_RECEP_F1_2"/>
    <property type="match status" value="1"/>
</dbReference>
<proteinExistence type="evidence at protein level"/>
<gene>
    <name type="primary">NMUR2</name>
    <name type="synonym">NMU2R</name>
    <name type="synonym">TGR1</name>
</gene>
<sequence>MSGMEKLQNASWIYQQKLEDPFQKHLNSTEEYLAFLCGPRRSHFFLPVSVVYVPIFVVGVIGNVLVCLVILQHQAMKTPTNYYLFSLAVSDLLVLLLGMPLEVYEMWRNYPFLFGPVGCYFKTALFETVCFASILSITTVSVERYVAILHPFRAKLQSTRRRALRILGIVWGFSVLFSLPNTSIHGIKFHYFPNGSLVPGSATCTVIKPMWIYNFIIQVTSFLFYLLPMTVISVLYYLMALRLKKDKSLEADEGNANIQRPCRKSVNKMLFVLVLVFAICWAPFHIDRLFFSFVEEWSESLAAVFNLVHVVSGVFFYLSSAVNPIIYNLLSRRFQAAFQNVISSFHKQWHSQHDPQLPPAQRNIFLTECHFVELTEDIGPQFPCQSSMHNSHLPAALSSEQMSRTNYQSFHFNKT</sequence>
<keyword id="KW-0002">3D-structure</keyword>
<keyword id="KW-1003">Cell membrane</keyword>
<keyword id="KW-1015">Disulfide bond</keyword>
<keyword id="KW-0297">G-protein coupled receptor</keyword>
<keyword id="KW-0325">Glycoprotein</keyword>
<keyword id="KW-0472">Membrane</keyword>
<keyword id="KW-0675">Receptor</keyword>
<keyword id="KW-1185">Reference proteome</keyword>
<keyword id="KW-0807">Transducer</keyword>
<keyword id="KW-0812">Transmembrane</keyword>
<keyword id="KW-1133">Transmembrane helix</keyword>
<organism>
    <name type="scientific">Homo sapiens</name>
    <name type="common">Human</name>
    <dbReference type="NCBI Taxonomy" id="9606"/>
    <lineage>
        <taxon>Eukaryota</taxon>
        <taxon>Metazoa</taxon>
        <taxon>Chordata</taxon>
        <taxon>Craniata</taxon>
        <taxon>Vertebrata</taxon>
        <taxon>Euteleostomi</taxon>
        <taxon>Mammalia</taxon>
        <taxon>Eutheria</taxon>
        <taxon>Euarchontoglires</taxon>
        <taxon>Primates</taxon>
        <taxon>Haplorrhini</taxon>
        <taxon>Catarrhini</taxon>
        <taxon>Hominidae</taxon>
        <taxon>Homo</taxon>
    </lineage>
</organism>
<protein>
    <recommendedName>
        <fullName>Neuromedin-U receptor 2</fullName>
        <shortName>NMU-R2</shortName>
    </recommendedName>
    <alternativeName>
        <fullName>G-protein coupled receptor FM-4</fullName>
    </alternativeName>
    <alternativeName>
        <fullName>G-protein coupled receptor TGR-1</fullName>
    </alternativeName>
</protein>
<reference key="1">
    <citation type="journal article" date="2000" name="J. Biol. Chem.">
        <title>Identification and functional characterization of a novel subtype of neuromedin U receptor.</title>
        <authorList>
            <person name="Hosoya M."/>
            <person name="Moriya T."/>
            <person name="Kawamata Y."/>
            <person name="Ohkubo S."/>
            <person name="Fujii R."/>
            <person name="Matsui H."/>
            <person name="Shintani Y."/>
            <person name="Fukusumi S."/>
            <person name="Habata Y."/>
            <person name="Hinuma S."/>
            <person name="Onda H."/>
            <person name="Nishimura O."/>
            <person name="Fujino M."/>
        </authorList>
    </citation>
    <scope>NUCLEOTIDE SEQUENCE [MRNA]</scope>
    <scope>TISSUE SPECIFICITY</scope>
    <scope>VARIANT THR-395</scope>
</reference>
<reference key="2">
    <citation type="journal article" date="2000" name="J. Biol. Chem.">
        <title>Identification and characterization of two neuromedin U receptors differentially expressed in peripheral tissues and the central nervous system.</title>
        <authorList>
            <person name="Raddatz R."/>
            <person name="Wilson A.E."/>
            <person name="Artymyshyn R."/>
            <person name="Bonini J.A."/>
            <person name="Borowsky B."/>
            <person name="Boteju L.W."/>
            <person name="Zhou S."/>
            <person name="Kouranova E.V."/>
            <person name="Nagorny R."/>
            <person name="Guevarra M.S."/>
            <person name="Dai M."/>
            <person name="Lerman G.S."/>
            <person name="Vaysse P.J."/>
            <person name="Branchek T.A."/>
            <person name="Gerald C."/>
            <person name="Forray C."/>
            <person name="Adham N."/>
        </authorList>
    </citation>
    <scope>NUCLEOTIDE SEQUENCE [MRNA]</scope>
    <scope>FUNCTION</scope>
    <scope>TISSUE SPECIFICITY</scope>
    <scope>VARIANT THR-395</scope>
</reference>
<reference key="3">
    <citation type="journal article" date="2000" name="J. Biol. Chem.">
        <title>Identification of a novel neuromedin U receptor subtype expressed in the central nervous system.</title>
        <authorList>
            <person name="Shan L."/>
            <person name="Qiao X."/>
            <person name="Crona J.H."/>
            <person name="Behan J."/>
            <person name="Wang S."/>
            <person name="Laz T."/>
            <person name="Bayne M."/>
            <person name="Gustafson E.L."/>
            <person name="Monsma F.J. Jr."/>
            <person name="Hedrick J.A."/>
        </authorList>
    </citation>
    <scope>NUCLEOTIDE SEQUENCE [MRNA]</scope>
    <scope>TISSUE SPECIFICITY</scope>
    <scope>VARIANT THR-395</scope>
</reference>
<reference key="4">
    <citation type="journal article" date="2004" name="Nature">
        <title>The DNA sequence and comparative analysis of human chromosome 5.</title>
        <authorList>
            <person name="Schmutz J."/>
            <person name="Martin J."/>
            <person name="Terry A."/>
            <person name="Couronne O."/>
            <person name="Grimwood J."/>
            <person name="Lowry S."/>
            <person name="Gordon L.A."/>
            <person name="Scott D."/>
            <person name="Xie G."/>
            <person name="Huang W."/>
            <person name="Hellsten U."/>
            <person name="Tran-Gyamfi M."/>
            <person name="She X."/>
            <person name="Prabhakar S."/>
            <person name="Aerts A."/>
            <person name="Altherr M."/>
            <person name="Bajorek E."/>
            <person name="Black S."/>
            <person name="Branscomb E."/>
            <person name="Caoile C."/>
            <person name="Challacombe J.F."/>
            <person name="Chan Y.M."/>
            <person name="Denys M."/>
            <person name="Detter J.C."/>
            <person name="Escobar J."/>
            <person name="Flowers D."/>
            <person name="Fotopulos D."/>
            <person name="Glavina T."/>
            <person name="Gomez M."/>
            <person name="Gonzales E."/>
            <person name="Goodstein D."/>
            <person name="Grigoriev I."/>
            <person name="Groza M."/>
            <person name="Hammon N."/>
            <person name="Hawkins T."/>
            <person name="Haydu L."/>
            <person name="Israni S."/>
            <person name="Jett J."/>
            <person name="Kadner K."/>
            <person name="Kimball H."/>
            <person name="Kobayashi A."/>
            <person name="Lopez F."/>
            <person name="Lou Y."/>
            <person name="Martinez D."/>
            <person name="Medina C."/>
            <person name="Morgan J."/>
            <person name="Nandkeshwar R."/>
            <person name="Noonan J.P."/>
            <person name="Pitluck S."/>
            <person name="Pollard M."/>
            <person name="Predki P."/>
            <person name="Priest J."/>
            <person name="Ramirez L."/>
            <person name="Retterer J."/>
            <person name="Rodriguez A."/>
            <person name="Rogers S."/>
            <person name="Salamov A."/>
            <person name="Salazar A."/>
            <person name="Thayer N."/>
            <person name="Tice H."/>
            <person name="Tsai M."/>
            <person name="Ustaszewska A."/>
            <person name="Vo N."/>
            <person name="Wheeler J."/>
            <person name="Wu K."/>
            <person name="Yang J."/>
            <person name="Dickson M."/>
            <person name="Cheng J.-F."/>
            <person name="Eichler E.E."/>
            <person name="Olsen A."/>
            <person name="Pennacchio L.A."/>
            <person name="Rokhsar D.S."/>
            <person name="Richardson P."/>
            <person name="Lucas S.M."/>
            <person name="Myers R.M."/>
            <person name="Rubin E.M."/>
        </authorList>
    </citation>
    <scope>NUCLEOTIDE SEQUENCE [LARGE SCALE GENOMIC DNA]</scope>
</reference>
<reference key="5">
    <citation type="journal article" date="2004" name="Genome Res.">
        <title>The status, quality, and expansion of the NIH full-length cDNA project: the Mammalian Gene Collection (MGC).</title>
        <authorList>
            <consortium name="The MGC Project Team"/>
        </authorList>
    </citation>
    <scope>NUCLEOTIDE SEQUENCE [LARGE SCALE MRNA]</scope>
    <scope>VARIANT THR-395</scope>
    <source>
        <tissue>Colon</tissue>
        <tissue>Placenta</tissue>
    </source>
</reference>
<reference key="6">
    <citation type="journal article" date="2000" name="Nature">
        <title>Identification of receptors for neuromedin U and its role in feeding.</title>
        <authorList>
            <person name="Howard A.D."/>
            <person name="Wang R."/>
            <person name="Pong S.-S."/>
            <person name="Mellin T.N."/>
            <person name="Strack A."/>
            <person name="Guan X.-M."/>
            <person name="Zeng Z."/>
            <person name="Williams D.L."/>
            <person name="Feighner S.D."/>
            <person name="Nunes C.N."/>
            <person name="Murphy B."/>
            <person name="Stair J.N."/>
            <person name="Yu H."/>
            <person name="Jiang Q."/>
            <person name="Clements M.K."/>
            <person name="Tan C.P."/>
            <person name="Mckee K.K."/>
            <person name="Hreniuk D.L."/>
            <person name="Mcdonald T.P."/>
            <person name="Lynch K.R."/>
            <person name="Evans J.F."/>
            <person name="Austin C.P."/>
            <person name="Caskey T."/>
            <person name="van der Ploeg L.H.T."/>
            <person name="Liu Q."/>
        </authorList>
    </citation>
    <scope>NUCLEOTIDE SEQUENCE [MRNA] OF 4-415</scope>
    <scope>TISSUE SPECIFICITY</scope>
    <scope>VARIANT THR-395</scope>
</reference>
<feature type="chain" id="PRO_0000069910" description="Neuromedin-U receptor 2">
    <location>
        <begin position="1"/>
        <end position="415"/>
    </location>
</feature>
<feature type="topological domain" description="Extracellular" evidence="2">
    <location>
        <begin position="1"/>
        <end position="49"/>
    </location>
</feature>
<feature type="transmembrane region" description="Helical; Name=1" evidence="2">
    <location>
        <begin position="50"/>
        <end position="70"/>
    </location>
</feature>
<feature type="topological domain" description="Cytoplasmic" evidence="2">
    <location>
        <begin position="71"/>
        <end position="82"/>
    </location>
</feature>
<feature type="transmembrane region" description="Helical; Name=2" evidence="2">
    <location>
        <begin position="83"/>
        <end position="103"/>
    </location>
</feature>
<feature type="topological domain" description="Extracellular" evidence="2">
    <location>
        <begin position="104"/>
        <end position="123"/>
    </location>
</feature>
<feature type="transmembrane region" description="Helical; Name=3" evidence="2">
    <location>
        <begin position="124"/>
        <end position="146"/>
    </location>
</feature>
<feature type="topological domain" description="Cytoplasmic" evidence="2">
    <location>
        <begin position="147"/>
        <end position="165"/>
    </location>
</feature>
<feature type="transmembrane region" description="Helical; Name=4" evidence="2">
    <location>
        <begin position="166"/>
        <end position="186"/>
    </location>
</feature>
<feature type="topological domain" description="Extracellular" evidence="2">
    <location>
        <begin position="187"/>
        <end position="214"/>
    </location>
</feature>
<feature type="transmembrane region" description="Helical; Name=5" evidence="2">
    <location>
        <begin position="215"/>
        <end position="235"/>
    </location>
</feature>
<feature type="topological domain" description="Cytoplasmic" evidence="2">
    <location>
        <begin position="236"/>
        <end position="265"/>
    </location>
</feature>
<feature type="transmembrane region" description="Helical; Name=6" evidence="2">
    <location>
        <begin position="266"/>
        <end position="286"/>
    </location>
</feature>
<feature type="topological domain" description="Extracellular" evidence="2">
    <location>
        <begin position="287"/>
        <end position="301"/>
    </location>
</feature>
<feature type="transmembrane region" description="Helical; Name=7" evidence="2">
    <location>
        <begin position="302"/>
        <end position="322"/>
    </location>
</feature>
<feature type="topological domain" description="Cytoplasmic" evidence="2">
    <location>
        <begin position="323"/>
        <end position="415"/>
    </location>
</feature>
<feature type="glycosylation site" description="N-linked (GlcNAc...) asparagine" evidence="2">
    <location>
        <position position="9"/>
    </location>
</feature>
<feature type="glycosylation site" description="N-linked (GlcNAc...) asparagine" evidence="2">
    <location>
        <position position="27"/>
    </location>
</feature>
<feature type="glycosylation site" description="N-linked (GlcNAc...) asparagine" evidence="2">
    <location>
        <position position="194"/>
    </location>
</feature>
<feature type="disulfide bond" evidence="3">
    <location>
        <begin position="119"/>
        <end position="204"/>
    </location>
</feature>
<feature type="sequence variant" id="VAR_023941" description="In dbSNP:rs4958535.">
    <original>S</original>
    <variation>T</variation>
    <location>
        <position position="298"/>
    </location>
</feature>
<feature type="sequence variant" id="VAR_023942" description="In dbSNP:rs1895245.">
    <original>F</original>
    <variation>L</variation>
    <location>
        <position position="315"/>
    </location>
</feature>
<feature type="sequence variant" id="VAR_032770" description="In dbSNP:rs4958532.">
    <original>P</original>
    <variation>L</variation>
    <location>
        <position position="383"/>
    </location>
</feature>
<feature type="sequence variant" id="VAR_023943" description="In dbSNP:rs4958531.">
    <original>M</original>
    <variation>V</variation>
    <location>
        <position position="388"/>
    </location>
</feature>
<feature type="sequence variant" id="VAR_023944" description="In dbSNP:rs1363422." evidence="4 5 6 7 8">
    <original>A</original>
    <variation>T</variation>
    <location>
        <position position="395"/>
    </location>
</feature>
<feature type="sequence conflict" description="In Ref. 5; AAH16938." evidence="9" ref="5">
    <original>C</original>
    <variation>F</variation>
    <location>
        <position position="204"/>
    </location>
</feature>
<feature type="helix" evidence="10">
    <location>
        <begin position="45"/>
        <end position="72"/>
    </location>
</feature>
<feature type="helix" evidence="10">
    <location>
        <begin position="74"/>
        <end position="76"/>
    </location>
</feature>
<feature type="helix" evidence="10">
    <location>
        <begin position="79"/>
        <end position="107"/>
    </location>
</feature>
<feature type="helix" evidence="10">
    <location>
        <begin position="116"/>
        <end position="149"/>
    </location>
</feature>
<feature type="helix" evidence="10">
    <location>
        <begin position="151"/>
        <end position="157"/>
    </location>
</feature>
<feature type="helix" evidence="10">
    <location>
        <begin position="160"/>
        <end position="183"/>
    </location>
</feature>
<feature type="strand" evidence="10">
    <location>
        <begin position="185"/>
        <end position="187"/>
    </location>
</feature>
<feature type="strand" evidence="11">
    <location>
        <begin position="193"/>
        <end position="197"/>
    </location>
</feature>
<feature type="strand" evidence="10">
    <location>
        <begin position="204"/>
        <end position="206"/>
    </location>
</feature>
<feature type="helix" evidence="10">
    <location>
        <begin position="210"/>
        <end position="224"/>
    </location>
</feature>
<feature type="helix" evidence="10">
    <location>
        <begin position="226"/>
        <end position="244"/>
    </location>
</feature>
<feature type="helix" evidence="10">
    <location>
        <begin position="247"/>
        <end position="249"/>
    </location>
</feature>
<feature type="turn" evidence="10">
    <location>
        <begin position="256"/>
        <end position="258"/>
    </location>
</feature>
<feature type="helix" evidence="10">
    <location>
        <begin position="259"/>
        <end position="293"/>
    </location>
</feature>
<feature type="helix" evidence="10">
    <location>
        <begin position="299"/>
        <end position="327"/>
    </location>
</feature>
<feature type="strand" evidence="10">
    <location>
        <begin position="329"/>
        <end position="331"/>
    </location>
</feature>
<feature type="helix" evidence="10">
    <location>
        <begin position="332"/>
        <end position="345"/>
    </location>
</feature>